<keyword id="KW-0686">Riboflavin biosynthesis</keyword>
<keyword id="KW-0808">Transferase</keyword>
<dbReference type="EC" id="2.5.1.78" evidence="1"/>
<dbReference type="EMBL" id="CP000777">
    <property type="protein sequence ID" value="ABZ94583.1"/>
    <property type="molecule type" value="Genomic_DNA"/>
</dbReference>
<dbReference type="RefSeq" id="WP_012389112.1">
    <property type="nucleotide sequence ID" value="NC_010842.1"/>
</dbReference>
<dbReference type="SMR" id="B0SB77"/>
<dbReference type="KEGG" id="lbf:LBF_2086"/>
<dbReference type="HOGENOM" id="CLU_089358_1_1_12"/>
<dbReference type="UniPathway" id="UPA00275">
    <property type="reaction ID" value="UER00404"/>
</dbReference>
<dbReference type="GO" id="GO:0005829">
    <property type="term" value="C:cytosol"/>
    <property type="evidence" value="ECO:0007669"/>
    <property type="project" value="TreeGrafter"/>
</dbReference>
<dbReference type="GO" id="GO:0009349">
    <property type="term" value="C:riboflavin synthase complex"/>
    <property type="evidence" value="ECO:0007669"/>
    <property type="project" value="InterPro"/>
</dbReference>
<dbReference type="GO" id="GO:0000906">
    <property type="term" value="F:6,7-dimethyl-8-ribityllumazine synthase activity"/>
    <property type="evidence" value="ECO:0007669"/>
    <property type="project" value="UniProtKB-UniRule"/>
</dbReference>
<dbReference type="GO" id="GO:0009231">
    <property type="term" value="P:riboflavin biosynthetic process"/>
    <property type="evidence" value="ECO:0007669"/>
    <property type="project" value="UniProtKB-UniRule"/>
</dbReference>
<dbReference type="CDD" id="cd09209">
    <property type="entry name" value="Lumazine_synthase-I"/>
    <property type="match status" value="1"/>
</dbReference>
<dbReference type="Gene3D" id="3.40.50.960">
    <property type="entry name" value="Lumazine/riboflavin synthase"/>
    <property type="match status" value="1"/>
</dbReference>
<dbReference type="HAMAP" id="MF_00178">
    <property type="entry name" value="Lumazine_synth"/>
    <property type="match status" value="1"/>
</dbReference>
<dbReference type="InterPro" id="IPR034964">
    <property type="entry name" value="LS"/>
</dbReference>
<dbReference type="InterPro" id="IPR002180">
    <property type="entry name" value="LS/RS"/>
</dbReference>
<dbReference type="InterPro" id="IPR036467">
    <property type="entry name" value="LS/RS_sf"/>
</dbReference>
<dbReference type="NCBIfam" id="TIGR00114">
    <property type="entry name" value="lumazine-synth"/>
    <property type="match status" value="1"/>
</dbReference>
<dbReference type="PANTHER" id="PTHR21058:SF0">
    <property type="entry name" value="6,7-DIMETHYL-8-RIBITYLLUMAZINE SYNTHASE"/>
    <property type="match status" value="1"/>
</dbReference>
<dbReference type="PANTHER" id="PTHR21058">
    <property type="entry name" value="6,7-DIMETHYL-8-RIBITYLLUMAZINE SYNTHASE DMRL SYNTHASE LUMAZINE SYNTHASE"/>
    <property type="match status" value="1"/>
</dbReference>
<dbReference type="Pfam" id="PF00885">
    <property type="entry name" value="DMRL_synthase"/>
    <property type="match status" value="1"/>
</dbReference>
<dbReference type="SUPFAM" id="SSF52121">
    <property type="entry name" value="Lumazine synthase"/>
    <property type="match status" value="1"/>
</dbReference>
<sequence length="155" mass="16408">MTAQLEGLRIGNGQKHCVIVSKFNEFITESLLKGAKDAYRQHGVAESDVTVIYVPGAFELPQTVKRVLGSKKYQFSAIVCLGAVIRGATSHYDLVSGEAAKVGSVADGSVPVIFGVITTESIEQAIERAGTKAGNKGYEAATTAIEMANLFKEIG</sequence>
<feature type="chain" id="PRO_1000098203" description="6,7-dimethyl-8-ribityllumazine synthase">
    <location>
        <begin position="1"/>
        <end position="155"/>
    </location>
</feature>
<feature type="active site" description="Proton donor" evidence="1">
    <location>
        <position position="91"/>
    </location>
</feature>
<feature type="binding site" evidence="1">
    <location>
        <position position="23"/>
    </location>
    <ligand>
        <name>5-amino-6-(D-ribitylamino)uracil</name>
        <dbReference type="ChEBI" id="CHEBI:15934"/>
    </ligand>
</feature>
<feature type="binding site" evidence="1">
    <location>
        <begin position="57"/>
        <end position="59"/>
    </location>
    <ligand>
        <name>5-amino-6-(D-ribitylamino)uracil</name>
        <dbReference type="ChEBI" id="CHEBI:15934"/>
    </ligand>
</feature>
<feature type="binding site" evidence="1">
    <location>
        <begin position="83"/>
        <end position="85"/>
    </location>
    <ligand>
        <name>5-amino-6-(D-ribitylamino)uracil</name>
        <dbReference type="ChEBI" id="CHEBI:15934"/>
    </ligand>
</feature>
<feature type="binding site" evidence="1">
    <location>
        <begin position="88"/>
        <end position="89"/>
    </location>
    <ligand>
        <name>(2S)-2-hydroxy-3-oxobutyl phosphate</name>
        <dbReference type="ChEBI" id="CHEBI:58830"/>
    </ligand>
</feature>
<feature type="binding site" evidence="1">
    <location>
        <position position="114"/>
    </location>
    <ligand>
        <name>5-amino-6-(D-ribitylamino)uracil</name>
        <dbReference type="ChEBI" id="CHEBI:15934"/>
    </ligand>
</feature>
<feature type="binding site" evidence="1">
    <location>
        <position position="128"/>
    </location>
    <ligand>
        <name>(2S)-2-hydroxy-3-oxobutyl phosphate</name>
        <dbReference type="ChEBI" id="CHEBI:58830"/>
    </ligand>
</feature>
<proteinExistence type="inferred from homology"/>
<accession>B0SB77</accession>
<organism>
    <name type="scientific">Leptospira biflexa serovar Patoc (strain Patoc 1 / Ames)</name>
    <dbReference type="NCBI Taxonomy" id="355278"/>
    <lineage>
        <taxon>Bacteria</taxon>
        <taxon>Pseudomonadati</taxon>
        <taxon>Spirochaetota</taxon>
        <taxon>Spirochaetia</taxon>
        <taxon>Leptospirales</taxon>
        <taxon>Leptospiraceae</taxon>
        <taxon>Leptospira</taxon>
    </lineage>
</organism>
<comment type="function">
    <text evidence="1">Catalyzes the formation of 6,7-dimethyl-8-ribityllumazine by condensation of 5-amino-6-(D-ribitylamino)uracil with 3,4-dihydroxy-2-butanone 4-phosphate. This is the penultimate step in the biosynthesis of riboflavin.</text>
</comment>
<comment type="catalytic activity">
    <reaction evidence="1">
        <text>(2S)-2-hydroxy-3-oxobutyl phosphate + 5-amino-6-(D-ribitylamino)uracil = 6,7-dimethyl-8-(1-D-ribityl)lumazine + phosphate + 2 H2O + H(+)</text>
        <dbReference type="Rhea" id="RHEA:26152"/>
        <dbReference type="ChEBI" id="CHEBI:15377"/>
        <dbReference type="ChEBI" id="CHEBI:15378"/>
        <dbReference type="ChEBI" id="CHEBI:15934"/>
        <dbReference type="ChEBI" id="CHEBI:43474"/>
        <dbReference type="ChEBI" id="CHEBI:58201"/>
        <dbReference type="ChEBI" id="CHEBI:58830"/>
        <dbReference type="EC" id="2.5.1.78"/>
    </reaction>
</comment>
<comment type="pathway">
    <text evidence="1">Cofactor biosynthesis; riboflavin biosynthesis; riboflavin from 2-hydroxy-3-oxobutyl phosphate and 5-amino-6-(D-ribitylamino)uracil: step 1/2.</text>
</comment>
<comment type="similarity">
    <text evidence="1">Belongs to the DMRL synthase family.</text>
</comment>
<gene>
    <name evidence="1" type="primary">ribH</name>
    <name type="ordered locus">LBF_2086</name>
</gene>
<reference key="1">
    <citation type="journal article" date="2008" name="PLoS ONE">
        <title>Genome sequence of the saprophyte Leptospira biflexa provides insights into the evolution of Leptospira and the pathogenesis of leptospirosis.</title>
        <authorList>
            <person name="Picardeau M."/>
            <person name="Bulach D.M."/>
            <person name="Bouchier C."/>
            <person name="Zuerner R.L."/>
            <person name="Zidane N."/>
            <person name="Wilson P.J."/>
            <person name="Creno S."/>
            <person name="Kuczek E.S."/>
            <person name="Bommezzadri S."/>
            <person name="Davis J.C."/>
            <person name="McGrath A."/>
            <person name="Johnson M.J."/>
            <person name="Boursaux-Eude C."/>
            <person name="Seemann T."/>
            <person name="Rouy Z."/>
            <person name="Coppel R.L."/>
            <person name="Rood J.I."/>
            <person name="Lajus A."/>
            <person name="Davies J.K."/>
            <person name="Medigue C."/>
            <person name="Adler B."/>
        </authorList>
    </citation>
    <scope>NUCLEOTIDE SEQUENCE [LARGE SCALE GENOMIC DNA]</scope>
    <source>
        <strain>Patoc 1 / Ames</strain>
    </source>
</reference>
<evidence type="ECO:0000255" key="1">
    <source>
        <dbReference type="HAMAP-Rule" id="MF_00178"/>
    </source>
</evidence>
<name>RISB_LEPBA</name>
<protein>
    <recommendedName>
        <fullName evidence="1">6,7-dimethyl-8-ribityllumazine synthase</fullName>
        <shortName evidence="1">DMRL synthase</shortName>
        <shortName evidence="1">LS</shortName>
        <shortName evidence="1">Lumazine synthase</shortName>
        <ecNumber evidence="1">2.5.1.78</ecNumber>
    </recommendedName>
</protein>